<keyword id="KW-1185">Reference proteome</keyword>
<dbReference type="EMBL" id="X69198">
    <property type="protein sequence ID" value="CAA49102.1"/>
    <property type="molecule type" value="Genomic_DNA"/>
</dbReference>
<dbReference type="EMBL" id="X67118">
    <property type="protein sequence ID" value="CAA47544.1"/>
    <property type="molecule type" value="Genomic_DNA"/>
</dbReference>
<dbReference type="PIR" id="S46843">
    <property type="entry name" value="S46843"/>
</dbReference>
<dbReference type="RefSeq" id="NP_042205.1">
    <property type="nucleotide sequence ID" value="NC_001611.1"/>
</dbReference>
<dbReference type="SMR" id="P0DSQ7"/>
<dbReference type="GeneID" id="1486449"/>
<dbReference type="KEGG" id="vg:1486449"/>
<dbReference type="Proteomes" id="UP000002060">
    <property type="component" value="Segment"/>
</dbReference>
<dbReference type="InterPro" id="IPR009473">
    <property type="entry name" value="Orthopox_A49"/>
</dbReference>
<dbReference type="Pfam" id="PF06489">
    <property type="entry name" value="Orthopox_A49R"/>
    <property type="match status" value="1"/>
</dbReference>
<accession>P0DSQ7</accession>
<accession>P33857</accession>
<protein>
    <recommendedName>
        <fullName>Protein A49</fullName>
    </recommendedName>
</protein>
<evidence type="ECO:0000305" key="1"/>
<feature type="chain" id="PRO_0000099344" description="Protein A49">
    <location>
        <begin position="1"/>
        <end position="162"/>
    </location>
</feature>
<proteinExistence type="inferred from homology"/>
<gene>
    <name type="ORF">A49R</name>
    <name type="ORF">J3R</name>
</gene>
<sequence length="162" mass="18749">MDEGYYSGNLESVLGYVSDMHTKLASITQLVIAKIETIDNDILNNDIVNFIMCRSNLNNPFISFLDTVYTIIDQEIYQNELINSLDDNKIIDCIVNKFMSFYKDNLENIVDAIITLKYIMNNPDFKTTYAEVLGSRIADIDIKQVIRENILQLSNDIRERYL</sequence>
<organism>
    <name type="scientific">Variola virus (isolate Human/India/Ind3/1967)</name>
    <name type="common">VARV</name>
    <name type="synonym">Smallpox virus</name>
    <dbReference type="NCBI Taxonomy" id="587200"/>
    <lineage>
        <taxon>Viruses</taxon>
        <taxon>Varidnaviria</taxon>
        <taxon>Bamfordvirae</taxon>
        <taxon>Nucleocytoviricota</taxon>
        <taxon>Pokkesviricetes</taxon>
        <taxon>Chitovirales</taxon>
        <taxon>Poxviridae</taxon>
        <taxon>Chordopoxvirinae</taxon>
        <taxon>Orthopoxvirus</taxon>
        <taxon>Variola virus</taxon>
    </lineage>
</organism>
<organismHost>
    <name type="scientific">Homo sapiens</name>
    <name type="common">Human</name>
    <dbReference type="NCBI Taxonomy" id="9606"/>
</organismHost>
<comment type="similarity">
    <text evidence="1">Belongs to the poxviridae A49 protein family.</text>
</comment>
<reference key="1">
    <citation type="journal article" date="1991" name="Dokl. Akad. Nauk SSSR">
        <title>Creation of a clone library of fragments from the natural variola virus and study of the structural and functional organization of viral genes from a circle of hosts.</title>
        <authorList>
            <person name="Shchelkunov S.N."/>
            <person name="Marennikova S.S."/>
            <person name="Totmenin A.V."/>
            <person name="Blinov V.M."/>
            <person name="Chizhikov V.E."/>
            <person name="Gutorov V.V."/>
            <person name="Safronov P.F."/>
            <person name="Pozdnyakov S.G."/>
            <person name="Shelukhina E.M."/>
            <person name="Gashnikov P.V."/>
            <person name="Anjaparidze O.G."/>
            <person name="Sandakhchiev L.S."/>
        </authorList>
    </citation>
    <scope>NUCLEOTIDE SEQUENCE [GENOMIC DNA]</scope>
</reference>
<reference key="2">
    <citation type="journal article" date="1993" name="FEBS Lett.">
        <title>Genes of variola and vaccinia viruses necessary to overcome the host protective mechanisms.</title>
        <authorList>
            <person name="Shchelkunov S.N."/>
            <person name="Blinov V.M."/>
            <person name="Sandakhchiev L.S."/>
        </authorList>
    </citation>
    <scope>NUCLEOTIDE SEQUENCE [GENOMIC DNA]</scope>
</reference>
<name>A49_VAR67</name>